<gene>
    <name evidence="10" type="primary">N4BP1</name>
    <name evidence="7" type="synonym">KIAA0615</name>
</gene>
<keyword id="KW-0002">3D-structure</keyword>
<keyword id="KW-0963">Cytoplasm</keyword>
<keyword id="KW-0378">Hydrolase</keyword>
<keyword id="KW-0391">Immunity</keyword>
<keyword id="KW-0399">Innate immunity</keyword>
<keyword id="KW-0540">Nuclease</keyword>
<keyword id="KW-0539">Nucleus</keyword>
<keyword id="KW-0597">Phosphoprotein</keyword>
<keyword id="KW-1267">Proteomics identification</keyword>
<keyword id="KW-1185">Reference proteome</keyword>
<keyword id="KW-0694">RNA-binding</keyword>
<keyword id="KW-0832">Ubl conjugation</keyword>
<reference key="1">
    <citation type="journal article" date="1998" name="DNA Res.">
        <title>Prediction of the coding sequences of unidentified human genes. X. The complete sequences of 100 new cDNA clones from brain which can code for large proteins in vitro.</title>
        <authorList>
            <person name="Ishikawa K."/>
            <person name="Nagase T."/>
            <person name="Suyama M."/>
            <person name="Miyajima N."/>
            <person name="Tanaka A."/>
            <person name="Kotani H."/>
            <person name="Nomura N."/>
            <person name="Ohara O."/>
        </authorList>
    </citation>
    <scope>NUCLEOTIDE SEQUENCE [LARGE SCALE MRNA]</scope>
    <scope>TISSUE SPECIFICITY</scope>
    <source>
        <tissue>Brain</tissue>
    </source>
</reference>
<reference key="2">
    <citation type="journal article" date="2004" name="Nature">
        <title>The sequence and analysis of duplication-rich human chromosome 16.</title>
        <authorList>
            <person name="Martin J."/>
            <person name="Han C."/>
            <person name="Gordon L.A."/>
            <person name="Terry A."/>
            <person name="Prabhakar S."/>
            <person name="She X."/>
            <person name="Xie G."/>
            <person name="Hellsten U."/>
            <person name="Chan Y.M."/>
            <person name="Altherr M."/>
            <person name="Couronne O."/>
            <person name="Aerts A."/>
            <person name="Bajorek E."/>
            <person name="Black S."/>
            <person name="Blumer H."/>
            <person name="Branscomb E."/>
            <person name="Brown N.C."/>
            <person name="Bruno W.J."/>
            <person name="Buckingham J.M."/>
            <person name="Callen D.F."/>
            <person name="Campbell C.S."/>
            <person name="Campbell M.L."/>
            <person name="Campbell E.W."/>
            <person name="Caoile C."/>
            <person name="Challacombe J.F."/>
            <person name="Chasteen L.A."/>
            <person name="Chertkov O."/>
            <person name="Chi H.C."/>
            <person name="Christensen M."/>
            <person name="Clark L.M."/>
            <person name="Cohn J.D."/>
            <person name="Denys M."/>
            <person name="Detter J.C."/>
            <person name="Dickson M."/>
            <person name="Dimitrijevic-Bussod M."/>
            <person name="Escobar J."/>
            <person name="Fawcett J.J."/>
            <person name="Flowers D."/>
            <person name="Fotopulos D."/>
            <person name="Glavina T."/>
            <person name="Gomez M."/>
            <person name="Gonzales E."/>
            <person name="Goodstein D."/>
            <person name="Goodwin L.A."/>
            <person name="Grady D.L."/>
            <person name="Grigoriev I."/>
            <person name="Groza M."/>
            <person name="Hammon N."/>
            <person name="Hawkins T."/>
            <person name="Haydu L."/>
            <person name="Hildebrand C.E."/>
            <person name="Huang W."/>
            <person name="Israni S."/>
            <person name="Jett J."/>
            <person name="Jewett P.B."/>
            <person name="Kadner K."/>
            <person name="Kimball H."/>
            <person name="Kobayashi A."/>
            <person name="Krawczyk M.-C."/>
            <person name="Leyba T."/>
            <person name="Longmire J.L."/>
            <person name="Lopez F."/>
            <person name="Lou Y."/>
            <person name="Lowry S."/>
            <person name="Ludeman T."/>
            <person name="Manohar C.F."/>
            <person name="Mark G.A."/>
            <person name="McMurray K.L."/>
            <person name="Meincke L.J."/>
            <person name="Morgan J."/>
            <person name="Moyzis R.K."/>
            <person name="Mundt M.O."/>
            <person name="Munk A.C."/>
            <person name="Nandkeshwar R.D."/>
            <person name="Pitluck S."/>
            <person name="Pollard M."/>
            <person name="Predki P."/>
            <person name="Parson-Quintana B."/>
            <person name="Ramirez L."/>
            <person name="Rash S."/>
            <person name="Retterer J."/>
            <person name="Ricke D.O."/>
            <person name="Robinson D.L."/>
            <person name="Rodriguez A."/>
            <person name="Salamov A."/>
            <person name="Saunders E.H."/>
            <person name="Scott D."/>
            <person name="Shough T."/>
            <person name="Stallings R.L."/>
            <person name="Stalvey M."/>
            <person name="Sutherland R.D."/>
            <person name="Tapia R."/>
            <person name="Tesmer J.G."/>
            <person name="Thayer N."/>
            <person name="Thompson L.S."/>
            <person name="Tice H."/>
            <person name="Torney D.C."/>
            <person name="Tran-Gyamfi M."/>
            <person name="Tsai M."/>
            <person name="Ulanovsky L.E."/>
            <person name="Ustaszewska A."/>
            <person name="Vo N."/>
            <person name="White P.S."/>
            <person name="Williams A.L."/>
            <person name="Wills P.L."/>
            <person name="Wu J.-R."/>
            <person name="Wu K."/>
            <person name="Yang J."/>
            <person name="DeJong P."/>
            <person name="Bruce D."/>
            <person name="Doggett N.A."/>
            <person name="Deaven L."/>
            <person name="Schmutz J."/>
            <person name="Grimwood J."/>
            <person name="Richardson P."/>
            <person name="Rokhsar D.S."/>
            <person name="Eichler E.E."/>
            <person name="Gilna P."/>
            <person name="Lucas S.M."/>
            <person name="Myers R.M."/>
            <person name="Rubin E.M."/>
            <person name="Pennacchio L.A."/>
        </authorList>
    </citation>
    <scope>NUCLEOTIDE SEQUENCE [LARGE SCALE GENOMIC DNA]</scope>
</reference>
<reference key="3">
    <citation type="journal article" date="2004" name="Genome Res.">
        <title>The status, quality, and expansion of the NIH full-length cDNA project: the Mammalian Gene Collection (MGC).</title>
        <authorList>
            <consortium name="The MGC Project Team"/>
        </authorList>
    </citation>
    <scope>NUCLEOTIDE SEQUENCE [LARGE SCALE MRNA]</scope>
    <source>
        <tissue>Uterus</tissue>
    </source>
</reference>
<reference key="4">
    <citation type="journal article" date="2008" name="Proc. Natl. Acad. Sci. U.S.A.">
        <title>A quantitative atlas of mitotic phosphorylation.</title>
        <authorList>
            <person name="Dephoure N."/>
            <person name="Zhou C."/>
            <person name="Villen J."/>
            <person name="Beausoleil S.A."/>
            <person name="Bakalarski C.E."/>
            <person name="Elledge S.J."/>
            <person name="Gygi S.P."/>
        </authorList>
    </citation>
    <scope>PHOSPHORYLATION [LARGE SCALE ANALYSIS] AT SER-226 AND SER-258</scope>
    <scope>IDENTIFICATION BY MASS SPECTROMETRY [LARGE SCALE ANALYSIS]</scope>
    <source>
        <tissue>Cervix carcinoma</tissue>
    </source>
</reference>
<reference key="5">
    <citation type="journal article" date="2009" name="Anal. Chem.">
        <title>Lys-N and trypsin cover complementary parts of the phosphoproteome in a refined SCX-based approach.</title>
        <authorList>
            <person name="Gauci S."/>
            <person name="Helbig A.O."/>
            <person name="Slijper M."/>
            <person name="Krijgsveld J."/>
            <person name="Heck A.J."/>
            <person name="Mohammed S."/>
        </authorList>
    </citation>
    <scope>IDENTIFICATION BY MASS SPECTROMETRY [LARGE SCALE ANALYSIS]</scope>
</reference>
<reference key="6">
    <citation type="journal article" date="2009" name="Sci. Signal.">
        <title>Quantitative phosphoproteomic analysis of T cell receptor signaling reveals system-wide modulation of protein-protein interactions.</title>
        <authorList>
            <person name="Mayya V."/>
            <person name="Lundgren D.H."/>
            <person name="Hwang S.-I."/>
            <person name="Rezaul K."/>
            <person name="Wu L."/>
            <person name="Eng J.K."/>
            <person name="Rodionov V."/>
            <person name="Han D.K."/>
        </authorList>
    </citation>
    <scope>PHOSPHORYLATION [LARGE SCALE ANALYSIS] AT SER-258 AND SER-300</scope>
    <scope>IDENTIFICATION BY MASS SPECTROMETRY [LARGE SCALE ANALYSIS]</scope>
    <source>
        <tissue>Leukemic T-cell</tissue>
    </source>
</reference>
<reference key="7">
    <citation type="journal article" date="2010" name="Sci. Signal.">
        <title>Quantitative phosphoproteomics reveals widespread full phosphorylation site occupancy during mitosis.</title>
        <authorList>
            <person name="Olsen J.V."/>
            <person name="Vermeulen M."/>
            <person name="Santamaria A."/>
            <person name="Kumar C."/>
            <person name="Miller M.L."/>
            <person name="Jensen L.J."/>
            <person name="Gnad F."/>
            <person name="Cox J."/>
            <person name="Jensen T.S."/>
            <person name="Nigg E.A."/>
            <person name="Brunak S."/>
            <person name="Mann M."/>
        </authorList>
    </citation>
    <scope>PHOSPHORYLATION [LARGE SCALE ANALYSIS] AT SER-300</scope>
    <scope>IDENTIFICATION BY MASS SPECTROMETRY [LARGE SCALE ANALYSIS]</scope>
    <source>
        <tissue>Cervix carcinoma</tissue>
    </source>
</reference>
<reference key="8">
    <citation type="journal article" date="2013" name="J. Proteome Res.">
        <title>Toward a comprehensive characterization of a human cancer cell phosphoproteome.</title>
        <authorList>
            <person name="Zhou H."/>
            <person name="Di Palma S."/>
            <person name="Preisinger C."/>
            <person name="Peng M."/>
            <person name="Polat A.N."/>
            <person name="Heck A.J."/>
            <person name="Mohammed S."/>
        </authorList>
    </citation>
    <scope>PHOSPHORYLATION [LARGE SCALE ANALYSIS] AT THR-242 AND SER-300</scope>
    <scope>IDENTIFICATION BY MASS SPECTROMETRY [LARGE SCALE ANALYSIS]</scope>
    <source>
        <tissue>Cervix carcinoma</tissue>
        <tissue>Erythroleukemia</tissue>
    </source>
</reference>
<reference key="9">
    <citation type="journal article" date="2014" name="J. Proteomics">
        <title>An enzyme assisted RP-RPLC approach for in-depth analysis of human liver phosphoproteome.</title>
        <authorList>
            <person name="Bian Y."/>
            <person name="Song C."/>
            <person name="Cheng K."/>
            <person name="Dong M."/>
            <person name="Wang F."/>
            <person name="Huang J."/>
            <person name="Sun D."/>
            <person name="Wang L."/>
            <person name="Ye M."/>
            <person name="Zou H."/>
        </authorList>
    </citation>
    <scope>PHOSPHORYLATION [LARGE SCALE ANALYSIS] AT SER-300</scope>
    <scope>IDENTIFICATION BY MASS SPECTROMETRY [LARGE SCALE ANALYSIS]</scope>
    <source>
        <tissue>Liver</tissue>
    </source>
</reference>
<reference key="10">
    <citation type="journal article" date="2019" name="Biomolecules">
        <title>CoCUN, a novel ubiquitin binding domain identified in N4BP1.</title>
        <authorList>
            <person name="Nepravishta R."/>
            <person name="Ferrentino F."/>
            <person name="Mandaliti W."/>
            <person name="Mattioni A."/>
            <person name="Weber J."/>
            <person name="Polo S."/>
            <person name="Castagnoli L."/>
            <person name="Cesareni G."/>
            <person name="Paci M."/>
            <person name="Santonico E."/>
        </authorList>
    </citation>
    <scope>DOMAIN</scope>
    <scope>UBIQUITINATION</scope>
    <scope>MUTAGENESIS OF PRO-866</scope>
</reference>
<reference key="11">
    <citation type="journal article" date="2019" name="Biomolecules">
        <authorList>
            <person name="Nepravishta R."/>
            <person name="Ferrentino F."/>
            <person name="Mandaliti W."/>
            <person name="Mattioni A."/>
            <person name="Weber J."/>
            <person name="Polo S."/>
            <person name="Castagnoli L."/>
            <person name="Cesareni G."/>
            <person name="Paci M."/>
            <person name="Santonico E."/>
        </authorList>
    </citation>
    <scope>ERRATUM OF PUBMED:31319543</scope>
</reference>
<reference key="12">
    <citation type="journal article" date="2019" name="Nat. Microbiol.">
        <title>N4BP1 restricts HIV-1 and its inactivation by MALT1 promotes viral reactivation.</title>
        <authorList>
            <person name="Yamasoba D."/>
            <person name="Sato K."/>
            <person name="Ichinose T."/>
            <person name="Imamura T."/>
            <person name="Koepke L."/>
            <person name="Joas S."/>
            <person name="Reith E."/>
            <person name="Hotter D."/>
            <person name="Misawa N."/>
            <person name="Akaki K."/>
            <person name="Uehata T."/>
            <person name="Mino T."/>
            <person name="Miyamoto S."/>
            <person name="Noda T."/>
            <person name="Yamashita A."/>
            <person name="Standley D.M."/>
            <person name="Kirchhoff F."/>
            <person name="Sauter D."/>
            <person name="Koyanagi Y."/>
            <person name="Takeuchi O."/>
        </authorList>
    </citation>
    <scope>FUNCTION</scope>
    <scope>CATALYTIC ACTIVITY</scope>
    <scope>ACTIVITY REGULATION</scope>
    <scope>PROTEOLYTIC CLEAVAGE</scope>
    <scope>INDUCTION</scope>
    <scope>MUTAGENESIS OF ARG-509 AND ASP-623</scope>
</reference>
<reference evidence="11" key="13">
    <citation type="submission" date="2018-12" db="PDB data bank">
        <title>Crystal structure of Human N4BP1 KH domains.</title>
        <authorList>
            <person name="Garg A."/>
            <person name="Heinemann U."/>
        </authorList>
    </citation>
    <scope>X-RAY CRYSTALLOGRAPHY (1.88 ANGSTROMS) OF 8-193</scope>
</reference>
<sequence length="896" mass="100379">MAARAVLDEFTAPAEKAELLEQSRGRIEGLFGVSLAVLGALGAEEPLPARIWLQLCGAQEAVHSAKEYIKGICEPELEERECYPKDMHCIFVGAESLFLKSLIQDTCADLCILDIGLLGIRGSAEAVVMARSHIQQFVKLFENKENLPSSQKESEVKREFKQFVEAHADNYTMDLLILPTSLKKELLTLTQGEENLFETGDDEVIEMRDSQQTEFTQNAATGLNISRDETVLQEEARNKAGTPVSELTKQMDTVLSSSPDVLFDPINGLTPDEEALSNERICQKRRFSDSEERHTKKQFSLENVQEGEILHDAKTLAGNVIADLSDSSADSENLSPDIKETTEEMEYNILVNFFKTMGYSQEIVEKVIKVYGPSTEPLLLLEEIEKENKRFQEDREFSAGTVYPETNKTKNKGVYSSTNELTTDSTPKKTQAHTQQNMVEKFSQLPFKVEAKPCTSNCRINTFRTVPIEQKHEVWGSNQNYICNTDPETDGLSPSVASPSPKEVNFVSRGASSHQPRVPLFPENGLHQQPEPLLPNNMKSACEKRLGCCSSPHSKPNCSTLSPPMPLPQLLPSVTDARSAGPSDHIDSSVTGVQRFRDTLKIPYKLELKNEPGRTDLKHIVIDGSNVAITHGLKKFFSCRGIAIAVEYFWKLGNRNITVFVPQWRTRRDPNVTEQHFLTQLQELGILSLTPARMVFGERIASHDDRFLLHLADKTGGIIVTNDNFREFVNESVSWREIITKRLLQYTFVGDIFMVPDDPLGRSGPRLEEFLQKEVCLRDMQPLLSALPNVGMFDPSFRVPGTQAASTSHQPPTRIQGAPSSHWLPQQPHFPLLPALPSLQQNLPMPAQRSSAETNELREALLKIFPDSEQRLKIDQILVAHPYMKDLNALSAMVLD</sequence>
<dbReference type="EC" id="3.1.-.-" evidence="4"/>
<dbReference type="EMBL" id="AB014515">
    <property type="protein sequence ID" value="BAA31590.2"/>
    <property type="status" value="ALT_INIT"/>
    <property type="molecule type" value="mRNA"/>
</dbReference>
<dbReference type="EMBL" id="AC023813">
    <property type="status" value="NOT_ANNOTATED_CDS"/>
    <property type="molecule type" value="Genomic_DNA"/>
</dbReference>
<dbReference type="EMBL" id="AC026470">
    <property type="status" value="NOT_ANNOTATED_CDS"/>
    <property type="molecule type" value="Genomic_DNA"/>
</dbReference>
<dbReference type="EMBL" id="BC108288">
    <property type="protein sequence ID" value="AAI08289.1"/>
    <property type="molecule type" value="mRNA"/>
</dbReference>
<dbReference type="EMBL" id="BC152472">
    <property type="protein sequence ID" value="AAI52473.1"/>
    <property type="molecule type" value="mRNA"/>
</dbReference>
<dbReference type="CCDS" id="CCDS45479.1"/>
<dbReference type="PIR" id="T00389">
    <property type="entry name" value="T00389"/>
</dbReference>
<dbReference type="RefSeq" id="NP_694574.3">
    <property type="nucleotide sequence ID" value="NM_153029.3"/>
</dbReference>
<dbReference type="PDB" id="6Q3V">
    <property type="method" value="X-ray"/>
    <property type="resolution" value="1.88 A"/>
    <property type="chains" value="A=8-193"/>
</dbReference>
<dbReference type="PDBsum" id="6Q3V"/>
<dbReference type="SMR" id="O75113"/>
<dbReference type="BioGRID" id="115036">
    <property type="interactions" value="47"/>
</dbReference>
<dbReference type="DIP" id="DIP-41205N"/>
<dbReference type="FunCoup" id="O75113">
    <property type="interactions" value="3123"/>
</dbReference>
<dbReference type="IntAct" id="O75113">
    <property type="interactions" value="13"/>
</dbReference>
<dbReference type="MINT" id="O75113"/>
<dbReference type="STRING" id="9606.ENSP00000262384"/>
<dbReference type="GlyCosmos" id="O75113">
    <property type="glycosylation" value="5 sites, 2 glycans"/>
</dbReference>
<dbReference type="GlyGen" id="O75113">
    <property type="glycosylation" value="8 sites, 2 O-linked glycans (8 sites)"/>
</dbReference>
<dbReference type="iPTMnet" id="O75113"/>
<dbReference type="MetOSite" id="O75113"/>
<dbReference type="PhosphoSitePlus" id="O75113"/>
<dbReference type="BioMuta" id="N4BP1"/>
<dbReference type="jPOST" id="O75113"/>
<dbReference type="MassIVE" id="O75113"/>
<dbReference type="PaxDb" id="9606-ENSP00000262384"/>
<dbReference type="PeptideAtlas" id="O75113"/>
<dbReference type="ProteomicsDB" id="49772"/>
<dbReference type="Pumba" id="O75113"/>
<dbReference type="Antibodypedia" id="49389">
    <property type="antibodies" value="135 antibodies from 30 providers"/>
</dbReference>
<dbReference type="DNASU" id="9683"/>
<dbReference type="Ensembl" id="ENST00000262384.4">
    <property type="protein sequence ID" value="ENSP00000262384.3"/>
    <property type="gene ID" value="ENSG00000102921.8"/>
</dbReference>
<dbReference type="GeneID" id="9683"/>
<dbReference type="KEGG" id="hsa:9683"/>
<dbReference type="MANE-Select" id="ENST00000262384.4">
    <property type="protein sequence ID" value="ENSP00000262384.3"/>
    <property type="RefSeq nucleotide sequence ID" value="NM_153029.4"/>
    <property type="RefSeq protein sequence ID" value="NP_694574.3"/>
</dbReference>
<dbReference type="UCSC" id="uc002efp.3">
    <property type="organism name" value="human"/>
</dbReference>
<dbReference type="AGR" id="HGNC:29850"/>
<dbReference type="CTD" id="9683"/>
<dbReference type="DisGeNET" id="9683"/>
<dbReference type="GeneCards" id="N4BP1"/>
<dbReference type="HGNC" id="HGNC:29850">
    <property type="gene designation" value="N4BP1"/>
</dbReference>
<dbReference type="HPA" id="ENSG00000102921">
    <property type="expression patterns" value="Low tissue specificity"/>
</dbReference>
<dbReference type="MIM" id="619138">
    <property type="type" value="gene"/>
</dbReference>
<dbReference type="neXtProt" id="NX_O75113"/>
<dbReference type="OpenTargets" id="ENSG00000102921"/>
<dbReference type="PharmGKB" id="PA162396561"/>
<dbReference type="VEuPathDB" id="HostDB:ENSG00000102921"/>
<dbReference type="eggNOG" id="KOG3777">
    <property type="taxonomic scope" value="Eukaryota"/>
</dbReference>
<dbReference type="GeneTree" id="ENSGT00940000158682"/>
<dbReference type="HOGENOM" id="CLU_014137_1_0_1"/>
<dbReference type="InParanoid" id="O75113"/>
<dbReference type="OMA" id="ICHKRRS"/>
<dbReference type="OrthoDB" id="392925at2759"/>
<dbReference type="PAN-GO" id="O75113">
    <property type="GO annotations" value="4 GO annotations based on evolutionary models"/>
</dbReference>
<dbReference type="PhylomeDB" id="O75113"/>
<dbReference type="TreeFam" id="TF315783"/>
<dbReference type="PathwayCommons" id="O75113"/>
<dbReference type="Reactome" id="R-HSA-9758274">
    <property type="pathway name" value="Regulation of NF-kappa B signaling"/>
</dbReference>
<dbReference type="SignaLink" id="O75113"/>
<dbReference type="SIGNOR" id="O75113"/>
<dbReference type="BioGRID-ORCS" id="9683">
    <property type="hits" value="18 hits in 1166 CRISPR screens"/>
</dbReference>
<dbReference type="ChiTaRS" id="N4BP1">
    <property type="organism name" value="human"/>
</dbReference>
<dbReference type="GenomeRNAi" id="9683"/>
<dbReference type="Pharos" id="O75113">
    <property type="development level" value="Tbio"/>
</dbReference>
<dbReference type="PRO" id="PR:O75113"/>
<dbReference type="Proteomes" id="UP000005640">
    <property type="component" value="Chromosome 16"/>
</dbReference>
<dbReference type="RNAct" id="O75113">
    <property type="molecule type" value="protein"/>
</dbReference>
<dbReference type="Bgee" id="ENSG00000102921">
    <property type="expression patterns" value="Expressed in amniotic fluid and 198 other cell types or tissues"/>
</dbReference>
<dbReference type="ExpressionAtlas" id="O75113">
    <property type="expression patterns" value="baseline and differential"/>
</dbReference>
<dbReference type="GO" id="GO:0005829">
    <property type="term" value="C:cytosol"/>
    <property type="evidence" value="ECO:0000250"/>
    <property type="project" value="UniProtKB"/>
</dbReference>
<dbReference type="GO" id="GO:0005730">
    <property type="term" value="C:nucleolus"/>
    <property type="evidence" value="ECO:0000250"/>
    <property type="project" value="UniProtKB"/>
</dbReference>
<dbReference type="GO" id="GO:0005634">
    <property type="term" value="C:nucleus"/>
    <property type="evidence" value="ECO:0000318"/>
    <property type="project" value="GO_Central"/>
</dbReference>
<dbReference type="GO" id="GO:0016605">
    <property type="term" value="C:PML body"/>
    <property type="evidence" value="ECO:0000250"/>
    <property type="project" value="UniProtKB"/>
</dbReference>
<dbReference type="GO" id="GO:0003729">
    <property type="term" value="F:mRNA binding"/>
    <property type="evidence" value="ECO:0000314"/>
    <property type="project" value="UniProtKB"/>
</dbReference>
<dbReference type="GO" id="GO:0004540">
    <property type="term" value="F:RNA nuclease activity"/>
    <property type="evidence" value="ECO:0000314"/>
    <property type="project" value="UniProtKB"/>
</dbReference>
<dbReference type="GO" id="GO:0043130">
    <property type="term" value="F:ubiquitin binding"/>
    <property type="evidence" value="ECO:0000314"/>
    <property type="project" value="UniProtKB"/>
</dbReference>
<dbReference type="GO" id="GO:0034644">
    <property type="term" value="P:cellular response to UV"/>
    <property type="evidence" value="ECO:0000315"/>
    <property type="project" value="BHF-UCL"/>
</dbReference>
<dbReference type="GO" id="GO:0045087">
    <property type="term" value="P:innate immune response"/>
    <property type="evidence" value="ECO:0007669"/>
    <property type="project" value="UniProtKB-KW"/>
</dbReference>
<dbReference type="GO" id="GO:0001818">
    <property type="term" value="P:negative regulation of cytokine production"/>
    <property type="evidence" value="ECO:0000250"/>
    <property type="project" value="UniProtKB"/>
</dbReference>
<dbReference type="GO" id="GO:0032435">
    <property type="term" value="P:negative regulation of proteasomal ubiquitin-dependent protein catabolic process"/>
    <property type="evidence" value="ECO:0000250"/>
    <property type="project" value="UniProtKB"/>
</dbReference>
<dbReference type="GO" id="GO:0031397">
    <property type="term" value="P:negative regulation of protein ubiquitination"/>
    <property type="evidence" value="ECO:0000250"/>
    <property type="project" value="UniProtKB"/>
</dbReference>
<dbReference type="GO" id="GO:0045071">
    <property type="term" value="P:negative regulation of viral genome replication"/>
    <property type="evidence" value="ECO:0000314"/>
    <property type="project" value="UniProtKB"/>
</dbReference>
<dbReference type="GO" id="GO:0045088">
    <property type="term" value="P:regulation of innate immune response"/>
    <property type="evidence" value="ECO:0000250"/>
    <property type="project" value="UniProtKB"/>
</dbReference>
<dbReference type="CDD" id="cd22476">
    <property type="entry name" value="KH-I_N4BP1"/>
    <property type="match status" value="1"/>
</dbReference>
<dbReference type="CDD" id="cd09032">
    <property type="entry name" value="KH-I_N4BP1_like_rpt1"/>
    <property type="match status" value="1"/>
</dbReference>
<dbReference type="CDD" id="cd18728">
    <property type="entry name" value="PIN_N4BP1-like"/>
    <property type="match status" value="1"/>
</dbReference>
<dbReference type="FunFam" id="3.40.50.11980:FF:000001">
    <property type="entry name" value="ZC3H12A isoform 1"/>
    <property type="match status" value="1"/>
</dbReference>
<dbReference type="Gene3D" id="3.40.50.11980">
    <property type="match status" value="1"/>
</dbReference>
<dbReference type="InterPro" id="IPR056629">
    <property type="entry name" value="KH_N4BP1_1st"/>
</dbReference>
<dbReference type="InterPro" id="IPR056630">
    <property type="entry name" value="KH_N4BP1_2nd"/>
</dbReference>
<dbReference type="InterPro" id="IPR021869">
    <property type="entry name" value="RNase_Zc3h12_NYN"/>
</dbReference>
<dbReference type="InterPro" id="IPR056631">
    <property type="entry name" value="UBA_N4BP1"/>
</dbReference>
<dbReference type="InterPro" id="IPR056578">
    <property type="entry name" value="UBA_N4BP1_C"/>
</dbReference>
<dbReference type="InterPro" id="IPR051101">
    <property type="entry name" value="ZC3H12/N4BP1_RNase_Reg"/>
</dbReference>
<dbReference type="PANTHER" id="PTHR12876">
    <property type="entry name" value="N4BP1-RELATED"/>
    <property type="match status" value="1"/>
</dbReference>
<dbReference type="PANTHER" id="PTHR12876:SF26">
    <property type="entry name" value="NEDD4-BINDING PROTEIN 1"/>
    <property type="match status" value="1"/>
</dbReference>
<dbReference type="Pfam" id="PF23050">
    <property type="entry name" value="KH_N4BP1_1st"/>
    <property type="match status" value="1"/>
</dbReference>
<dbReference type="Pfam" id="PF23052">
    <property type="entry name" value="KH_N4BP1_2nd"/>
    <property type="match status" value="1"/>
</dbReference>
<dbReference type="Pfam" id="PF11977">
    <property type="entry name" value="RNase_Zc3h12a"/>
    <property type="match status" value="1"/>
</dbReference>
<dbReference type="Pfam" id="PF23053">
    <property type="entry name" value="UBA_N4BP1"/>
    <property type="match status" value="1"/>
</dbReference>
<dbReference type="Pfam" id="PF23054">
    <property type="entry name" value="UBA_N4BP1_C"/>
    <property type="match status" value="1"/>
</dbReference>
<feature type="chain" id="PRO_0000096680" description="NEDD4-binding protein 1">
    <location>
        <begin position="1"/>
        <end position="896"/>
    </location>
</feature>
<feature type="domain" description="KH-like" evidence="2">
    <location>
        <begin position="59"/>
        <end position="143"/>
    </location>
</feature>
<feature type="domain" description="RNase NYN" evidence="2">
    <location>
        <begin position="617"/>
        <end position="769"/>
    </location>
</feature>
<feature type="region of interest" description="Disordered" evidence="3">
    <location>
        <begin position="403"/>
        <end position="430"/>
    </location>
</feature>
<feature type="region of interest" description="Disordered" evidence="3">
    <location>
        <begin position="488"/>
        <end position="507"/>
    </location>
</feature>
<feature type="region of interest" description="Disordered" evidence="3">
    <location>
        <begin position="801"/>
        <end position="821"/>
    </location>
</feature>
<feature type="region of interest" description="CoCUN" evidence="9">
    <location>
        <begin position="849"/>
        <end position="896"/>
    </location>
</feature>
<feature type="compositionally biased region" description="Polar residues" evidence="3">
    <location>
        <begin position="414"/>
        <end position="430"/>
    </location>
</feature>
<feature type="compositionally biased region" description="Polar residues" evidence="3">
    <location>
        <begin position="803"/>
        <end position="813"/>
    </location>
</feature>
<feature type="site" description="Cleavage; by CASP8" evidence="1">
    <location>
        <begin position="200"/>
        <end position="201"/>
    </location>
</feature>
<feature type="site" description="Cleavage" evidence="1">
    <location>
        <begin position="326"/>
        <end position="327"/>
    </location>
</feature>
<feature type="site" description="Cleavage; by CASP8" evidence="1">
    <location>
        <begin position="490"/>
        <end position="491"/>
    </location>
</feature>
<feature type="site" description="Cleavage; by MALT1" evidence="4">
    <location>
        <begin position="509"/>
        <end position="510"/>
    </location>
</feature>
<feature type="modified residue" description="Phosphoserine" evidence="12">
    <location>
        <position position="226"/>
    </location>
</feature>
<feature type="modified residue" description="Phosphothreonine" evidence="15">
    <location>
        <position position="242"/>
    </location>
</feature>
<feature type="modified residue" description="Phosphoserine" evidence="12 13">
    <location>
        <position position="258"/>
    </location>
</feature>
<feature type="modified residue" description="Phosphoserine" evidence="13 14 15 16">
    <location>
        <position position="300"/>
    </location>
</feature>
<feature type="modified residue" description="Phosphoserine" evidence="1">
    <location>
        <position position="562"/>
    </location>
</feature>
<feature type="mutagenesis site" description="Abolished cleavage by MALT1." evidence="4">
    <original>R</original>
    <variation>A</variation>
    <location>
        <position position="509"/>
    </location>
</feature>
<feature type="mutagenesis site" description="Abolished ability to degrade HIV-1 mRNAs." evidence="4">
    <original>D</original>
    <variation>N</variation>
    <location>
        <position position="623"/>
    </location>
</feature>
<feature type="mutagenesis site" description="Abolished ability to interact with ubiquitin." evidence="5">
    <original>P</original>
    <variation>A</variation>
    <location>
        <position position="866"/>
    </location>
</feature>
<feature type="sequence conflict" description="In Ref. 1; BAA31590 and 3; AAI52473." evidence="8" ref="1 3">
    <original>V</original>
    <variation>E</variation>
    <location>
        <position position="62"/>
    </location>
</feature>
<feature type="sequence conflict" description="In Ref. 3; AAI08289." evidence="8" ref="3">
    <original>L</original>
    <variation>P</variation>
    <location>
        <position position="600"/>
    </location>
</feature>
<feature type="strand" evidence="17">
    <location>
        <begin position="8"/>
        <end position="13"/>
    </location>
</feature>
<feature type="helix" evidence="17">
    <location>
        <begin position="14"/>
        <end position="16"/>
    </location>
</feature>
<feature type="helix" evidence="17">
    <location>
        <begin position="17"/>
        <end position="31"/>
    </location>
</feature>
<feature type="strand" evidence="17">
    <location>
        <begin position="34"/>
        <end position="37"/>
    </location>
</feature>
<feature type="strand" evidence="17">
    <location>
        <begin position="42"/>
        <end position="44"/>
    </location>
</feature>
<feature type="strand" evidence="17">
    <location>
        <begin position="50"/>
        <end position="57"/>
    </location>
</feature>
<feature type="helix" evidence="17">
    <location>
        <begin position="59"/>
        <end position="73"/>
    </location>
</feature>
<feature type="strand" evidence="17">
    <location>
        <begin position="76"/>
        <end position="82"/>
    </location>
</feature>
<feature type="helix" evidence="17">
    <location>
        <begin position="85"/>
        <end position="88"/>
    </location>
</feature>
<feature type="helix" evidence="17">
    <location>
        <begin position="89"/>
        <end position="92"/>
    </location>
</feature>
<feature type="helix" evidence="17">
    <location>
        <begin position="94"/>
        <end position="96"/>
    </location>
</feature>
<feature type="helix" evidence="17">
    <location>
        <begin position="97"/>
        <end position="106"/>
    </location>
</feature>
<feature type="strand" evidence="17">
    <location>
        <begin position="109"/>
        <end position="114"/>
    </location>
</feature>
<feature type="strand" evidence="17">
    <location>
        <begin position="117"/>
        <end position="123"/>
    </location>
</feature>
<feature type="helix" evidence="17">
    <location>
        <begin position="124"/>
        <end position="142"/>
    </location>
</feature>
<feature type="helix" evidence="17">
    <location>
        <begin position="151"/>
        <end position="165"/>
    </location>
</feature>
<feature type="helix" evidence="17">
    <location>
        <begin position="172"/>
        <end position="176"/>
    </location>
</feature>
<feature type="helix" evidence="17">
    <location>
        <begin position="180"/>
        <end position="191"/>
    </location>
</feature>
<accession>O75113</accession>
<accession>A7MD49</accession>
<accession>Q2YDX1</accession>
<comment type="function">
    <text evidence="1 4">Potent suppressor of cytokine production that acts as a regulator of innate immune signaling and inflammation. Acts as a key negative regulator of select cytokine and chemokine responses elicited by TRIF-independent Toll-like receptors (TLRs), thereby limiting inflammatory cytokine responses to minor insults. In response to more threatening pathogens, cleaved by CASP8 downstream of TLR3 or TLR4, leading to its inactivation, thereby allowing production of inflammatory cytokines (By similarity). Acts as a restriction factor against some viruses, such as HIV-1: restricts HIV-1 replication by binding to HIV-1 mRNAs and mediating their degradation via its ribonuclease activity (PubMed:31133753). Also acts as an inhibitor of the E3 ubiquitin-protein ligase ITCH: acts by interacting with the second WW domain of ITCH, leading to compete with ITCH's substrates and impairing ubiquitination of substrates (By similarity).</text>
</comment>
<comment type="activity regulation">
    <text evidence="4">Proteolytic cleavage by CASP8 or MALT1 leads to its inactivation.</text>
</comment>
<comment type="subunit">
    <text evidence="1">Interacts with NEDD4. Interacts with ITCH (via WW domain 2).</text>
</comment>
<comment type="interaction">
    <interactant intactId="EBI-5278391">
        <id>O75113</id>
    </interactant>
    <interactant intactId="EBI-1564678">
        <id>Q96J02</id>
        <label>ITCH</label>
    </interactant>
    <organismsDiffer>false</organismsDiffer>
    <experiments>3</experiments>
</comment>
<comment type="interaction">
    <interactant intactId="EBI-5278391">
        <id>O75113</id>
    </interactant>
    <interactant intactId="EBI-725647">
        <id>Q99732</id>
        <label>LITAF</label>
    </interactant>
    <organismsDiffer>false</organismsDiffer>
    <experiments>3</experiments>
</comment>
<comment type="interaction">
    <interactant intactId="EBI-5278391">
        <id>O75113</id>
    </interactant>
    <interactant intactId="EBI-2340316">
        <id>O15344</id>
        <label>MID1</label>
    </interactant>
    <organismsDiffer>false</organismsDiffer>
    <experiments>3</experiments>
</comment>
<comment type="interaction">
    <interactant intactId="EBI-5278391">
        <id>O75113</id>
    </interactant>
    <interactant intactId="EBI-6115874">
        <id>Q9QYP6</id>
        <label>Azi2</label>
    </interactant>
    <organismsDiffer>true</organismsDiffer>
    <experiments>2</experiments>
</comment>
<comment type="subcellular location">
    <subcellularLocation>
        <location evidence="1">Cytoplasm</location>
        <location evidence="1">Cytosol</location>
    </subcellularLocation>
    <subcellularLocation>
        <location evidence="1">Nucleus</location>
    </subcellularLocation>
    <subcellularLocation>
        <location evidence="1">Nucleus</location>
        <location evidence="1">Nucleolus</location>
    </subcellularLocation>
    <subcellularLocation>
        <location evidence="1">Nucleus</location>
        <location evidence="1">PML body</location>
    </subcellularLocation>
    <text evidence="1">Primarily localizes to the nucleolus. Also localizes to the PML nuclear bodies, when desumoylated.</text>
</comment>
<comment type="tissue specificity">
    <text evidence="6">Detected in heart, lung, brain, liver, skeletal muscle, pancreas, kidney, spleen, testis and ovary.</text>
</comment>
<comment type="induction">
    <text evidence="4">Up-regulated in response to interferon alpha (IFN-alpha) stimulation (at protein level).</text>
</comment>
<comment type="domain">
    <text evidence="5">The CoCUN region mediates binding to ubiquitin (PubMed:31319543). Does not interact with NEDD8 (PubMed:31319543).</text>
</comment>
<comment type="PTM">
    <text evidence="1 4">Proteolytically cleaved by CASP8 downstream of TLR3 or TLR4, leading to its inactivation. Mainly cleaved at Asp-490 by CASP8 (By similarity). Cleaved by caspase-like protein MALT1 in T-cells following TCR-mediated activation, leading to its inactivation and subsequent viral reactivation during HIV-1 infection (PubMed:31133753).</text>
</comment>
<comment type="PTM">
    <text evidence="1 5">Mono- and polyubiquitinated on the CoCUN region (PubMed:31319543). Monoubiquitinated by NEDD4 (By similarity). Polyubiquitinated, leading to its degradation by the proteasome (By similarity). Sumoylated with SUMO1, abrogating polyubiquitination and subsequent degradation (By similarity). Desumoylated by SENP1, leading to accumulation in PML nuclear bodies (By similarity).</text>
</comment>
<comment type="similarity">
    <text evidence="8">Belongs to the N4BP1 family.</text>
</comment>
<comment type="sequence caution" evidence="8">
    <conflict type="erroneous initiation">
        <sequence resource="EMBL-CDS" id="BAA31590"/>
    </conflict>
    <text>Extended N-terminus.</text>
</comment>
<organism>
    <name type="scientific">Homo sapiens</name>
    <name type="common">Human</name>
    <dbReference type="NCBI Taxonomy" id="9606"/>
    <lineage>
        <taxon>Eukaryota</taxon>
        <taxon>Metazoa</taxon>
        <taxon>Chordata</taxon>
        <taxon>Craniata</taxon>
        <taxon>Vertebrata</taxon>
        <taxon>Euteleostomi</taxon>
        <taxon>Mammalia</taxon>
        <taxon>Eutheria</taxon>
        <taxon>Euarchontoglires</taxon>
        <taxon>Primates</taxon>
        <taxon>Haplorrhini</taxon>
        <taxon>Catarrhini</taxon>
        <taxon>Hominidae</taxon>
        <taxon>Homo</taxon>
    </lineage>
</organism>
<proteinExistence type="evidence at protein level"/>
<evidence type="ECO:0000250" key="1">
    <source>
        <dbReference type="UniProtKB" id="Q6A037"/>
    </source>
</evidence>
<evidence type="ECO:0000255" key="2"/>
<evidence type="ECO:0000256" key="3">
    <source>
        <dbReference type="SAM" id="MobiDB-lite"/>
    </source>
</evidence>
<evidence type="ECO:0000269" key="4">
    <source>
    </source>
</evidence>
<evidence type="ECO:0000269" key="5">
    <source>
    </source>
</evidence>
<evidence type="ECO:0000269" key="6">
    <source>
    </source>
</evidence>
<evidence type="ECO:0000303" key="7">
    <source>
    </source>
</evidence>
<evidence type="ECO:0000305" key="8"/>
<evidence type="ECO:0000305" key="9">
    <source>
    </source>
</evidence>
<evidence type="ECO:0000312" key="10">
    <source>
        <dbReference type="HGNC" id="HGNC:29850"/>
    </source>
</evidence>
<evidence type="ECO:0007744" key="11">
    <source>
        <dbReference type="PDB" id="6Q3V"/>
    </source>
</evidence>
<evidence type="ECO:0007744" key="12">
    <source>
    </source>
</evidence>
<evidence type="ECO:0007744" key="13">
    <source>
    </source>
</evidence>
<evidence type="ECO:0007744" key="14">
    <source>
    </source>
</evidence>
<evidence type="ECO:0007744" key="15">
    <source>
    </source>
</evidence>
<evidence type="ECO:0007744" key="16">
    <source>
    </source>
</evidence>
<evidence type="ECO:0007829" key="17">
    <source>
        <dbReference type="PDB" id="6Q3V"/>
    </source>
</evidence>
<name>N4BP1_HUMAN</name>
<protein>
    <recommendedName>
        <fullName evidence="1">NEDD4-binding protein 1</fullName>
        <shortName evidence="1">N4BP1</shortName>
        <ecNumber evidence="4">3.1.-.-</ecNumber>
    </recommendedName>
</protein>